<name>HTPX_STRPG</name>
<accession>A2RGB7</accession>
<dbReference type="EC" id="3.4.24.-" evidence="1"/>
<dbReference type="EMBL" id="AM295007">
    <property type="protein sequence ID" value="CAM30896.1"/>
    <property type="molecule type" value="Genomic_DNA"/>
</dbReference>
<dbReference type="RefSeq" id="WP_002985953.1">
    <property type="nucleotide sequence ID" value="NC_009332.1"/>
</dbReference>
<dbReference type="SMR" id="A2RGB7"/>
<dbReference type="GeneID" id="69901385"/>
<dbReference type="KEGG" id="spf:SpyM51575"/>
<dbReference type="HOGENOM" id="CLU_042266_2_1_9"/>
<dbReference type="GO" id="GO:0005886">
    <property type="term" value="C:plasma membrane"/>
    <property type="evidence" value="ECO:0007669"/>
    <property type="project" value="UniProtKB-SubCell"/>
</dbReference>
<dbReference type="GO" id="GO:0004222">
    <property type="term" value="F:metalloendopeptidase activity"/>
    <property type="evidence" value="ECO:0007669"/>
    <property type="project" value="UniProtKB-UniRule"/>
</dbReference>
<dbReference type="GO" id="GO:0008270">
    <property type="term" value="F:zinc ion binding"/>
    <property type="evidence" value="ECO:0007669"/>
    <property type="project" value="UniProtKB-UniRule"/>
</dbReference>
<dbReference type="GO" id="GO:0006508">
    <property type="term" value="P:proteolysis"/>
    <property type="evidence" value="ECO:0007669"/>
    <property type="project" value="UniProtKB-KW"/>
</dbReference>
<dbReference type="CDD" id="cd07340">
    <property type="entry name" value="M48B_Htpx_like"/>
    <property type="match status" value="1"/>
</dbReference>
<dbReference type="Gene3D" id="3.30.2010.10">
    <property type="entry name" value="Metalloproteases ('zincins'), catalytic domain"/>
    <property type="match status" value="1"/>
</dbReference>
<dbReference type="HAMAP" id="MF_00188">
    <property type="entry name" value="Pept_M48_protease_HtpX"/>
    <property type="match status" value="1"/>
</dbReference>
<dbReference type="InterPro" id="IPR050083">
    <property type="entry name" value="HtpX_protease"/>
</dbReference>
<dbReference type="InterPro" id="IPR022919">
    <property type="entry name" value="Pept_M48_protease_HtpX"/>
</dbReference>
<dbReference type="InterPro" id="IPR001915">
    <property type="entry name" value="Peptidase_M48"/>
</dbReference>
<dbReference type="NCBIfam" id="NF003425">
    <property type="entry name" value="PRK04897.1"/>
    <property type="match status" value="1"/>
</dbReference>
<dbReference type="PANTHER" id="PTHR43221">
    <property type="entry name" value="PROTEASE HTPX"/>
    <property type="match status" value="1"/>
</dbReference>
<dbReference type="PANTHER" id="PTHR43221:SF1">
    <property type="entry name" value="PROTEASE HTPX"/>
    <property type="match status" value="1"/>
</dbReference>
<dbReference type="Pfam" id="PF01435">
    <property type="entry name" value="Peptidase_M48"/>
    <property type="match status" value="1"/>
</dbReference>
<reference key="1">
    <citation type="journal article" date="2007" name="J. Bacteriol.">
        <title>Complete genome of acute rheumatic fever-associated serotype M5 Streptococcus pyogenes strain Manfredo.</title>
        <authorList>
            <person name="Holden M.T.G."/>
            <person name="Scott A."/>
            <person name="Cherevach I."/>
            <person name="Chillingworth T."/>
            <person name="Churcher C."/>
            <person name="Cronin A."/>
            <person name="Dowd L."/>
            <person name="Feltwell T."/>
            <person name="Hamlin N."/>
            <person name="Holroyd S."/>
            <person name="Jagels K."/>
            <person name="Moule S."/>
            <person name="Mungall K."/>
            <person name="Quail M.A."/>
            <person name="Price C."/>
            <person name="Rabbinowitsch E."/>
            <person name="Sharp S."/>
            <person name="Skelton J."/>
            <person name="Whitehead S."/>
            <person name="Barrell B.G."/>
            <person name="Kehoe M."/>
            <person name="Parkhill J."/>
        </authorList>
    </citation>
    <scope>NUCLEOTIDE SEQUENCE [LARGE SCALE GENOMIC DNA]</scope>
    <source>
        <strain>Manfredo</strain>
    </source>
</reference>
<protein>
    <recommendedName>
        <fullName evidence="1">Protease HtpX homolog</fullName>
        <ecNumber evidence="1">3.4.24.-</ecNumber>
    </recommendedName>
</protein>
<comment type="cofactor">
    <cofactor evidence="1">
        <name>Zn(2+)</name>
        <dbReference type="ChEBI" id="CHEBI:29105"/>
    </cofactor>
    <text evidence="1">Binds 1 zinc ion per subunit.</text>
</comment>
<comment type="subcellular location">
    <subcellularLocation>
        <location evidence="1">Cell membrane</location>
        <topology evidence="1">Multi-pass membrane protein</topology>
    </subcellularLocation>
</comment>
<comment type="similarity">
    <text evidence="1">Belongs to the peptidase M48B family.</text>
</comment>
<proteinExistence type="inferred from homology"/>
<feature type="chain" id="PRO_1000020954" description="Protease HtpX homolog">
    <location>
        <begin position="1"/>
        <end position="298"/>
    </location>
</feature>
<feature type="transmembrane region" description="Helical" evidence="1">
    <location>
        <begin position="14"/>
        <end position="34"/>
    </location>
</feature>
<feature type="transmembrane region" description="Helical" evidence="1">
    <location>
        <begin position="39"/>
        <end position="59"/>
    </location>
</feature>
<feature type="transmembrane region" description="Helical" evidence="1">
    <location>
        <begin position="158"/>
        <end position="178"/>
    </location>
</feature>
<feature type="transmembrane region" description="Helical" evidence="1">
    <location>
        <begin position="197"/>
        <end position="217"/>
    </location>
</feature>
<feature type="active site" evidence="1">
    <location>
        <position position="144"/>
    </location>
</feature>
<feature type="binding site" evidence="1">
    <location>
        <position position="143"/>
    </location>
    <ligand>
        <name>Zn(2+)</name>
        <dbReference type="ChEBI" id="CHEBI:29105"/>
        <note>catalytic</note>
    </ligand>
</feature>
<feature type="binding site" evidence="1">
    <location>
        <position position="147"/>
    </location>
    <ligand>
        <name>Zn(2+)</name>
        <dbReference type="ChEBI" id="CHEBI:29105"/>
        <note>catalytic</note>
    </ligand>
</feature>
<feature type="binding site" evidence="1">
    <location>
        <position position="226"/>
    </location>
    <ligand>
        <name>Zn(2+)</name>
        <dbReference type="ChEBI" id="CHEBI:29105"/>
        <note>catalytic</note>
    </ligand>
</feature>
<keyword id="KW-1003">Cell membrane</keyword>
<keyword id="KW-0378">Hydrolase</keyword>
<keyword id="KW-0472">Membrane</keyword>
<keyword id="KW-0479">Metal-binding</keyword>
<keyword id="KW-0482">Metalloprotease</keyword>
<keyword id="KW-0645">Protease</keyword>
<keyword id="KW-0812">Transmembrane</keyword>
<keyword id="KW-1133">Transmembrane helix</keyword>
<keyword id="KW-0862">Zinc</keyword>
<sequence>MLYQQISQNKQRTVVLLVVFFALLALIGASAGYLLLDNYAMGLVLALVIGVIYATSMIFQSTSLVMSMNNAREVTEKEAPGFFHIVEDMAMVAQIPMPRVFIIEDPSLNAFATGSSPQNAAVAATTGLLEVMNREELEGVIGHEISHIRNYDIRISTIAVALASAVTVISSIGGRMLWYGGGSRRQRDDGDDDVLRIITLLLSLLSLLLAPLVASLIQLAISRQREYLADASSVELTRNPQGMIKALEKLQLSQPMKHPVDDASAALYINEPRKKRSFSSLFSTHPPIEERIERLKNM</sequence>
<evidence type="ECO:0000255" key="1">
    <source>
        <dbReference type="HAMAP-Rule" id="MF_00188"/>
    </source>
</evidence>
<gene>
    <name evidence="1" type="primary">htpX</name>
    <name type="ordered locus">SpyM51575</name>
</gene>
<organism>
    <name type="scientific">Streptococcus pyogenes serotype M5 (strain Manfredo)</name>
    <dbReference type="NCBI Taxonomy" id="160491"/>
    <lineage>
        <taxon>Bacteria</taxon>
        <taxon>Bacillati</taxon>
        <taxon>Bacillota</taxon>
        <taxon>Bacilli</taxon>
        <taxon>Lactobacillales</taxon>
        <taxon>Streptococcaceae</taxon>
        <taxon>Streptococcus</taxon>
    </lineage>
</organism>